<dbReference type="EC" id="2.7.7.72" evidence="1"/>
<dbReference type="EC" id="3.1.3.-" evidence="1"/>
<dbReference type="EC" id="3.1.4.-" evidence="1"/>
<dbReference type="EMBL" id="AE002098">
    <property type="protein sequence ID" value="AAF41622.1"/>
    <property type="molecule type" value="Genomic_DNA"/>
</dbReference>
<dbReference type="PIR" id="F81105">
    <property type="entry name" value="F81105"/>
</dbReference>
<dbReference type="RefSeq" id="NP_274265.1">
    <property type="nucleotide sequence ID" value="NC_003112.2"/>
</dbReference>
<dbReference type="RefSeq" id="WP_002225191.1">
    <property type="nucleotide sequence ID" value="NC_003112.2"/>
</dbReference>
<dbReference type="SMR" id="Q9JZ88"/>
<dbReference type="FunCoup" id="Q9JZ88">
    <property type="interactions" value="225"/>
</dbReference>
<dbReference type="STRING" id="122586.NMB1241"/>
<dbReference type="PaxDb" id="122586-NMB1241"/>
<dbReference type="KEGG" id="nme:NMB1241"/>
<dbReference type="PATRIC" id="fig|122586.8.peg.1552"/>
<dbReference type="HOGENOM" id="CLU_015961_1_1_4"/>
<dbReference type="InParanoid" id="Q9JZ88"/>
<dbReference type="OrthoDB" id="9805698at2"/>
<dbReference type="Proteomes" id="UP000000425">
    <property type="component" value="Chromosome"/>
</dbReference>
<dbReference type="GO" id="GO:0005524">
    <property type="term" value="F:ATP binding"/>
    <property type="evidence" value="ECO:0007669"/>
    <property type="project" value="UniProtKB-UniRule"/>
</dbReference>
<dbReference type="GO" id="GO:0004810">
    <property type="term" value="F:CCA tRNA nucleotidyltransferase activity"/>
    <property type="evidence" value="ECO:0007669"/>
    <property type="project" value="UniProtKB-UniRule"/>
</dbReference>
<dbReference type="GO" id="GO:0160016">
    <property type="term" value="F:CCACCA tRNA nucleotidyltransferase activity"/>
    <property type="evidence" value="ECO:0000318"/>
    <property type="project" value="GO_Central"/>
</dbReference>
<dbReference type="GO" id="GO:0004112">
    <property type="term" value="F:cyclic-nucleotide phosphodiesterase activity"/>
    <property type="evidence" value="ECO:0007669"/>
    <property type="project" value="UniProtKB-UniRule"/>
</dbReference>
<dbReference type="GO" id="GO:0000287">
    <property type="term" value="F:magnesium ion binding"/>
    <property type="evidence" value="ECO:0007669"/>
    <property type="project" value="UniProtKB-UniRule"/>
</dbReference>
<dbReference type="GO" id="GO:0016791">
    <property type="term" value="F:phosphatase activity"/>
    <property type="evidence" value="ECO:0007669"/>
    <property type="project" value="UniProtKB-UniRule"/>
</dbReference>
<dbReference type="GO" id="GO:0000049">
    <property type="term" value="F:tRNA binding"/>
    <property type="evidence" value="ECO:0007669"/>
    <property type="project" value="UniProtKB-UniRule"/>
</dbReference>
<dbReference type="GO" id="GO:0042245">
    <property type="term" value="P:RNA repair"/>
    <property type="evidence" value="ECO:0007669"/>
    <property type="project" value="UniProtKB-KW"/>
</dbReference>
<dbReference type="GO" id="GO:0001680">
    <property type="term" value="P:tRNA 3'-terminal CCA addition"/>
    <property type="evidence" value="ECO:0000318"/>
    <property type="project" value="GO_Central"/>
</dbReference>
<dbReference type="GO" id="GO:0106354">
    <property type="term" value="P:tRNA surveillance"/>
    <property type="evidence" value="ECO:0000318"/>
    <property type="project" value="GO_Central"/>
</dbReference>
<dbReference type="CDD" id="cd00077">
    <property type="entry name" value="HDc"/>
    <property type="match status" value="1"/>
</dbReference>
<dbReference type="CDD" id="cd05398">
    <property type="entry name" value="NT_ClassII-CCAase"/>
    <property type="match status" value="1"/>
</dbReference>
<dbReference type="Gene3D" id="3.30.460.10">
    <property type="entry name" value="Beta Polymerase, domain 2"/>
    <property type="match status" value="1"/>
</dbReference>
<dbReference type="Gene3D" id="1.10.3090.10">
    <property type="entry name" value="cca-adding enzyme, domain 2"/>
    <property type="match status" value="1"/>
</dbReference>
<dbReference type="HAMAP" id="MF_01261">
    <property type="entry name" value="CCA_bact_type1"/>
    <property type="match status" value="1"/>
</dbReference>
<dbReference type="HAMAP" id="MF_01262">
    <property type="entry name" value="CCA_bact_type2"/>
    <property type="match status" value="1"/>
</dbReference>
<dbReference type="InterPro" id="IPR012006">
    <property type="entry name" value="CCA_bact"/>
</dbReference>
<dbReference type="InterPro" id="IPR003607">
    <property type="entry name" value="HD/PDEase_dom"/>
</dbReference>
<dbReference type="InterPro" id="IPR006674">
    <property type="entry name" value="HD_domain"/>
</dbReference>
<dbReference type="InterPro" id="IPR043519">
    <property type="entry name" value="NT_sf"/>
</dbReference>
<dbReference type="InterPro" id="IPR002646">
    <property type="entry name" value="PolA_pol_head_dom"/>
</dbReference>
<dbReference type="InterPro" id="IPR032828">
    <property type="entry name" value="PolyA_RNA-bd"/>
</dbReference>
<dbReference type="InterPro" id="IPR050124">
    <property type="entry name" value="tRNA_CCA-adding_enzyme"/>
</dbReference>
<dbReference type="NCBIfam" id="NF008137">
    <property type="entry name" value="PRK10885.1"/>
    <property type="match status" value="1"/>
</dbReference>
<dbReference type="PANTHER" id="PTHR47545">
    <property type="entry name" value="MULTIFUNCTIONAL CCA PROTEIN"/>
    <property type="match status" value="1"/>
</dbReference>
<dbReference type="PANTHER" id="PTHR47545:SF1">
    <property type="entry name" value="MULTIFUNCTIONAL CCA PROTEIN"/>
    <property type="match status" value="1"/>
</dbReference>
<dbReference type="Pfam" id="PF01966">
    <property type="entry name" value="HD"/>
    <property type="match status" value="1"/>
</dbReference>
<dbReference type="Pfam" id="PF01743">
    <property type="entry name" value="PolyA_pol"/>
    <property type="match status" value="1"/>
</dbReference>
<dbReference type="Pfam" id="PF12627">
    <property type="entry name" value="PolyA_pol_RNAbd"/>
    <property type="match status" value="1"/>
</dbReference>
<dbReference type="PIRSF" id="PIRSF000813">
    <property type="entry name" value="CCA_bact"/>
    <property type="match status" value="1"/>
</dbReference>
<dbReference type="SUPFAM" id="SSF81301">
    <property type="entry name" value="Nucleotidyltransferase"/>
    <property type="match status" value="1"/>
</dbReference>
<dbReference type="SUPFAM" id="SSF81891">
    <property type="entry name" value="Poly A polymerase C-terminal region-like"/>
    <property type="match status" value="1"/>
</dbReference>
<dbReference type="PROSITE" id="PS51831">
    <property type="entry name" value="HD"/>
    <property type="match status" value="1"/>
</dbReference>
<sequence>MQTYLVGGAVRDYLLGLPVKDRDWVVVGADAQTMLAQGFQPVGKDFPVFLHPETHEEYALARTERKTAKGYVGFSFHADKDVTLEQDLMRRDLTINAMAQDADGKIIDPFGGQRDLAAGILRHVSPAFAEDPVRILRTARFAARYKFEIAEETIKLMRQMVENGEADALVAERVWQEFAKGLMEKNPRKMIEVLRECGALKVLLPEVNALFGVPQRADYHPEIDSGIHTLMTLQRAADMGLSLPERYAALLHDLGKAKTPSDILPRHHGHDLAGVEPVREVNQRLRAPKHCAELAELVCRWHIIFHQVGQLKSQTILNVLKKTDAFRRPERFQTALNVCIADTQGRLNREHTPYPQRAHWLALLEAANQADSGKIAAECRAQGKAHLIAEQIDRARLAQIAPLQKAFRAAQDKTEKH</sequence>
<name>CCA_NEIMB</name>
<proteinExistence type="inferred from homology"/>
<evidence type="ECO:0000255" key="1">
    <source>
        <dbReference type="HAMAP-Rule" id="MF_01261"/>
    </source>
</evidence>
<feature type="chain" id="PRO_0000138988" description="Multifunctional CCA protein">
    <location>
        <begin position="1"/>
        <end position="417"/>
    </location>
</feature>
<feature type="domain" description="HD" evidence="1">
    <location>
        <begin position="225"/>
        <end position="326"/>
    </location>
</feature>
<feature type="binding site" evidence="1">
    <location>
        <position position="8"/>
    </location>
    <ligand>
        <name>ATP</name>
        <dbReference type="ChEBI" id="CHEBI:30616"/>
    </ligand>
</feature>
<feature type="binding site" evidence="1">
    <location>
        <position position="8"/>
    </location>
    <ligand>
        <name>CTP</name>
        <dbReference type="ChEBI" id="CHEBI:37563"/>
    </ligand>
</feature>
<feature type="binding site" evidence="1">
    <location>
        <position position="11"/>
    </location>
    <ligand>
        <name>ATP</name>
        <dbReference type="ChEBI" id="CHEBI:30616"/>
    </ligand>
</feature>
<feature type="binding site" evidence="1">
    <location>
        <position position="11"/>
    </location>
    <ligand>
        <name>CTP</name>
        <dbReference type="ChEBI" id="CHEBI:37563"/>
    </ligand>
</feature>
<feature type="binding site" evidence="1">
    <location>
        <position position="21"/>
    </location>
    <ligand>
        <name>Mg(2+)</name>
        <dbReference type="ChEBI" id="CHEBI:18420"/>
    </ligand>
</feature>
<feature type="binding site" evidence="1">
    <location>
        <position position="23"/>
    </location>
    <ligand>
        <name>Mg(2+)</name>
        <dbReference type="ChEBI" id="CHEBI:18420"/>
    </ligand>
</feature>
<feature type="binding site" evidence="1">
    <location>
        <position position="91"/>
    </location>
    <ligand>
        <name>ATP</name>
        <dbReference type="ChEBI" id="CHEBI:30616"/>
    </ligand>
</feature>
<feature type="binding site" evidence="1">
    <location>
        <position position="91"/>
    </location>
    <ligand>
        <name>CTP</name>
        <dbReference type="ChEBI" id="CHEBI:37563"/>
    </ligand>
</feature>
<feature type="binding site" evidence="1">
    <location>
        <position position="137"/>
    </location>
    <ligand>
        <name>ATP</name>
        <dbReference type="ChEBI" id="CHEBI:30616"/>
    </ligand>
</feature>
<feature type="binding site" evidence="1">
    <location>
        <position position="137"/>
    </location>
    <ligand>
        <name>CTP</name>
        <dbReference type="ChEBI" id="CHEBI:37563"/>
    </ligand>
</feature>
<feature type="binding site" evidence="1">
    <location>
        <position position="140"/>
    </location>
    <ligand>
        <name>ATP</name>
        <dbReference type="ChEBI" id="CHEBI:30616"/>
    </ligand>
</feature>
<feature type="binding site" evidence="1">
    <location>
        <position position="140"/>
    </location>
    <ligand>
        <name>CTP</name>
        <dbReference type="ChEBI" id="CHEBI:37563"/>
    </ligand>
</feature>
<keyword id="KW-0067">ATP-binding</keyword>
<keyword id="KW-0378">Hydrolase</keyword>
<keyword id="KW-0460">Magnesium</keyword>
<keyword id="KW-0479">Metal-binding</keyword>
<keyword id="KW-0511">Multifunctional enzyme</keyword>
<keyword id="KW-0533">Nickel</keyword>
<keyword id="KW-0547">Nucleotide-binding</keyword>
<keyword id="KW-0548">Nucleotidyltransferase</keyword>
<keyword id="KW-1185">Reference proteome</keyword>
<keyword id="KW-0692">RNA repair</keyword>
<keyword id="KW-0694">RNA-binding</keyword>
<keyword id="KW-0808">Transferase</keyword>
<keyword id="KW-0819">tRNA processing</keyword>
<organism>
    <name type="scientific">Neisseria meningitidis serogroup B (strain ATCC BAA-335 / MC58)</name>
    <dbReference type="NCBI Taxonomy" id="122586"/>
    <lineage>
        <taxon>Bacteria</taxon>
        <taxon>Pseudomonadati</taxon>
        <taxon>Pseudomonadota</taxon>
        <taxon>Betaproteobacteria</taxon>
        <taxon>Neisseriales</taxon>
        <taxon>Neisseriaceae</taxon>
        <taxon>Neisseria</taxon>
    </lineage>
</organism>
<comment type="function">
    <text evidence="1">Catalyzes the addition and repair of the essential 3'-terminal CCA sequence in tRNAs without using a nucleic acid template. Adds these three nucleotides in the order of C, C, and A to the tRNA nucleotide-73, using CTP and ATP as substrates and producing inorganic pyrophosphate. tRNA 3'-terminal CCA addition is required both for tRNA processing and repair. Also involved in tRNA surveillance by mediating tandem CCA addition to generate a CCACCA at the 3' terminus of unstable tRNAs. While stable tRNAs receive only 3'-terminal CCA, unstable tRNAs are marked with CCACCA and rapidly degraded.</text>
</comment>
<comment type="catalytic activity">
    <reaction evidence="1">
        <text>a tRNA precursor + 2 CTP + ATP = a tRNA with a 3' CCA end + 3 diphosphate</text>
        <dbReference type="Rhea" id="RHEA:14433"/>
        <dbReference type="Rhea" id="RHEA-COMP:10465"/>
        <dbReference type="Rhea" id="RHEA-COMP:10468"/>
        <dbReference type="ChEBI" id="CHEBI:30616"/>
        <dbReference type="ChEBI" id="CHEBI:33019"/>
        <dbReference type="ChEBI" id="CHEBI:37563"/>
        <dbReference type="ChEBI" id="CHEBI:74896"/>
        <dbReference type="ChEBI" id="CHEBI:83071"/>
        <dbReference type="EC" id="2.7.7.72"/>
    </reaction>
</comment>
<comment type="catalytic activity">
    <reaction evidence="1">
        <text>a tRNA with a 3' CCA end + 2 CTP + ATP = a tRNA with a 3' CCACCA end + 3 diphosphate</text>
        <dbReference type="Rhea" id="RHEA:76235"/>
        <dbReference type="Rhea" id="RHEA-COMP:10468"/>
        <dbReference type="Rhea" id="RHEA-COMP:18655"/>
        <dbReference type="ChEBI" id="CHEBI:30616"/>
        <dbReference type="ChEBI" id="CHEBI:33019"/>
        <dbReference type="ChEBI" id="CHEBI:37563"/>
        <dbReference type="ChEBI" id="CHEBI:83071"/>
        <dbReference type="ChEBI" id="CHEBI:195187"/>
    </reaction>
    <physiologicalReaction direction="left-to-right" evidence="1">
        <dbReference type="Rhea" id="RHEA:76236"/>
    </physiologicalReaction>
</comment>
<comment type="cofactor">
    <cofactor evidence="1">
        <name>Mg(2+)</name>
        <dbReference type="ChEBI" id="CHEBI:18420"/>
    </cofactor>
    <text evidence="1">Magnesium is required for nucleotidyltransferase activity.</text>
</comment>
<comment type="cofactor">
    <cofactor evidence="1">
        <name>Ni(2+)</name>
        <dbReference type="ChEBI" id="CHEBI:49786"/>
    </cofactor>
    <text evidence="1">Nickel for phosphatase activity.</text>
</comment>
<comment type="subunit">
    <text evidence="1">Monomer. Can also form homodimers and oligomers.</text>
</comment>
<comment type="domain">
    <text evidence="1">Comprises two domains: an N-terminal domain containing the nucleotidyltransferase activity and a C-terminal HD domain associated with both phosphodiesterase and phosphatase activities.</text>
</comment>
<comment type="miscellaneous">
    <text evidence="1">A single active site specifically recognizes both ATP and CTP and is responsible for their addition.</text>
</comment>
<comment type="similarity">
    <text evidence="1">Belongs to the tRNA nucleotidyltransferase/poly(A) polymerase family. Bacterial CCA-adding enzyme type 1 subfamily.</text>
</comment>
<protein>
    <recommendedName>
        <fullName evidence="1">Multifunctional CCA protein</fullName>
    </recommendedName>
    <domain>
        <recommendedName>
            <fullName evidence="1">CCA-adding enzyme</fullName>
            <ecNumber evidence="1">2.7.7.72</ecNumber>
        </recommendedName>
        <alternativeName>
            <fullName evidence="1">CCA tRNA nucleotidyltransferase</fullName>
        </alternativeName>
        <alternativeName>
            <fullName evidence="1">tRNA CCA-pyrophosphorylase</fullName>
        </alternativeName>
        <alternativeName>
            <fullName evidence="1">tRNA adenylyl-/cytidylyl-transferase</fullName>
        </alternativeName>
        <alternativeName>
            <fullName evidence="1">tRNA nucleotidyltransferase</fullName>
        </alternativeName>
        <alternativeName>
            <fullName evidence="1">tRNA-NT</fullName>
        </alternativeName>
    </domain>
    <domain>
        <recommendedName>
            <fullName evidence="1">2'-nucleotidase</fullName>
            <ecNumber evidence="1">3.1.3.-</ecNumber>
        </recommendedName>
    </domain>
    <domain>
        <recommendedName>
            <fullName evidence="1">2',3'-cyclic phosphodiesterase</fullName>
            <ecNumber evidence="1">3.1.4.-</ecNumber>
        </recommendedName>
    </domain>
    <domain>
        <recommendedName>
            <fullName evidence="1">Phosphatase</fullName>
            <ecNumber evidence="1">3.1.3.-</ecNumber>
        </recommendedName>
    </domain>
</protein>
<reference key="1">
    <citation type="journal article" date="2000" name="Science">
        <title>Complete genome sequence of Neisseria meningitidis serogroup B strain MC58.</title>
        <authorList>
            <person name="Tettelin H."/>
            <person name="Saunders N.J."/>
            <person name="Heidelberg J.F."/>
            <person name="Jeffries A.C."/>
            <person name="Nelson K.E."/>
            <person name="Eisen J.A."/>
            <person name="Ketchum K.A."/>
            <person name="Hood D.W."/>
            <person name="Peden J.F."/>
            <person name="Dodson R.J."/>
            <person name="Nelson W.C."/>
            <person name="Gwinn M.L."/>
            <person name="DeBoy R.T."/>
            <person name="Peterson J.D."/>
            <person name="Hickey E.K."/>
            <person name="Haft D.H."/>
            <person name="Salzberg S.L."/>
            <person name="White O."/>
            <person name="Fleischmann R.D."/>
            <person name="Dougherty B.A."/>
            <person name="Mason T.M."/>
            <person name="Ciecko A."/>
            <person name="Parksey D.S."/>
            <person name="Blair E."/>
            <person name="Cittone H."/>
            <person name="Clark E.B."/>
            <person name="Cotton M.D."/>
            <person name="Utterback T.R."/>
            <person name="Khouri H.M."/>
            <person name="Qin H."/>
            <person name="Vamathevan J.J."/>
            <person name="Gill J."/>
            <person name="Scarlato V."/>
            <person name="Masignani V."/>
            <person name="Pizza M."/>
            <person name="Grandi G."/>
            <person name="Sun L."/>
            <person name="Smith H.O."/>
            <person name="Fraser C.M."/>
            <person name="Moxon E.R."/>
            <person name="Rappuoli R."/>
            <person name="Venter J.C."/>
        </authorList>
    </citation>
    <scope>NUCLEOTIDE SEQUENCE [LARGE SCALE GENOMIC DNA]</scope>
    <source>
        <strain>ATCC BAA-335 / MC58</strain>
    </source>
</reference>
<accession>Q9JZ88</accession>
<gene>
    <name evidence="1" type="primary">cca</name>
    <name type="ordered locus">NMB1241</name>
</gene>